<gene>
    <name evidence="6" type="primary">PE_PGRS3</name>
    <name evidence="6" type="ordered locus">Rv0278c</name>
    <name type="ORF">MTV035.06c</name>
</gene>
<dbReference type="EMBL" id="AL123456">
    <property type="protein sequence ID" value="CCP43008.1"/>
    <property type="molecule type" value="Genomic_DNA"/>
</dbReference>
<dbReference type="PIR" id="D70835">
    <property type="entry name" value="D70835"/>
</dbReference>
<dbReference type="RefSeq" id="WP_010886071.1">
    <property type="nucleotide sequence ID" value="NC_000962.3"/>
</dbReference>
<dbReference type="RefSeq" id="YP_177707.1">
    <property type="nucleotide sequence ID" value="NC_000962.3"/>
</dbReference>
<dbReference type="STRING" id="83332.Rv0278c"/>
<dbReference type="PaxDb" id="83332-Rv0278c"/>
<dbReference type="GeneID" id="886623"/>
<dbReference type="KEGG" id="mtu:Rv0278c"/>
<dbReference type="PATRIC" id="fig|83332.12.peg.310"/>
<dbReference type="TubercuList" id="Rv0278c"/>
<dbReference type="eggNOG" id="COG3391">
    <property type="taxonomic scope" value="Bacteria"/>
</dbReference>
<dbReference type="InParanoid" id="P9WIG3"/>
<dbReference type="OrthoDB" id="4753956at2"/>
<dbReference type="Proteomes" id="UP000001584">
    <property type="component" value="Chromosome"/>
</dbReference>
<dbReference type="GO" id="GO:0009279">
    <property type="term" value="C:cell outer membrane"/>
    <property type="evidence" value="ECO:0007669"/>
    <property type="project" value="UniProtKB-SubCell"/>
</dbReference>
<dbReference type="GO" id="GO:0009986">
    <property type="term" value="C:cell surface"/>
    <property type="evidence" value="ECO:0007669"/>
    <property type="project" value="UniProtKB-SubCell"/>
</dbReference>
<dbReference type="GO" id="GO:0005576">
    <property type="term" value="C:extracellular region"/>
    <property type="evidence" value="ECO:0007669"/>
    <property type="project" value="UniProtKB-SubCell"/>
</dbReference>
<dbReference type="FunFam" id="1.10.287.850:FF:000001">
    <property type="entry name" value="PE_PGRS39"/>
    <property type="match status" value="1"/>
</dbReference>
<dbReference type="Gene3D" id="1.10.287.850">
    <property type="entry name" value="HP0062-like domain"/>
    <property type="match status" value="1"/>
</dbReference>
<dbReference type="InterPro" id="IPR000084">
    <property type="entry name" value="PE-PGRS_N"/>
</dbReference>
<dbReference type="Pfam" id="PF00934">
    <property type="entry name" value="PE"/>
    <property type="match status" value="1"/>
</dbReference>
<dbReference type="SUPFAM" id="SSF140459">
    <property type="entry name" value="PE/PPE dimer-like"/>
    <property type="match status" value="1"/>
</dbReference>
<organism>
    <name type="scientific">Mycobacterium tuberculosis (strain ATCC 25618 / H37Rv)</name>
    <dbReference type="NCBI Taxonomy" id="83332"/>
    <lineage>
        <taxon>Bacteria</taxon>
        <taxon>Bacillati</taxon>
        <taxon>Actinomycetota</taxon>
        <taxon>Actinomycetes</taxon>
        <taxon>Mycobacteriales</taxon>
        <taxon>Mycobacteriaceae</taxon>
        <taxon>Mycobacterium</taxon>
        <taxon>Mycobacterium tuberculosis complex</taxon>
    </lineage>
</organism>
<accession>P9WIG3</accession>
<accession>L0T5Z6</accession>
<accession>P56877</accession>
<protein>
    <recommendedName>
        <fullName evidence="5">PE-PGRS family protein PE_PGRS3</fullName>
    </recommendedName>
</protein>
<proteinExistence type="evidence at protein level"/>
<sequence length="957" mass="81904">MSFVIAAPEVIAAAATDLASLGSSISAANAAAAANTTALMAAGADEVSTAIAALFGAHGQAYQALSAQAQAFHAQFVQALTSGGGAYAAAEAAAVSPLLDPINEFFLANTGRPLIGNGANGAPGTGANGGDGGWLIGNGGAGGSGAAGVNGGAGGNGGAGGNGGAGGLIGNGGAGGAGGVASSGIGGSGGAGGNAMLFGAGGAGGAGGGVVALTGGAGGAGGAGGNAGLLFGAAGVGGAGGFTNGSALGGAGGAGGAGGLFATGGVGGSGGAGSSGGAGGAGGAGGLFGAGGTGGHGGFADSSFGGVGGAGGAGGLFGAGGEGGSGGHSLVAGGDGGAGGNAGMLALGAAGGAGGIGGDGGTLTAGGIGGAGGAGGNAGLLFGSGGSGGAGGFGFADGGQGGPGGNAGTVFGSGGAGGNGGVGQGFAGGIGGAGGTPGLIGNGGNGGNGGASAVTGGNGGIGGTGVLIGNGGNGGSGGIGAGKAGVGGVSGLLLGLDGFNAPASTSPLHTLQQNVLNVVNEPFQTLTGRPLIGNGANGTPGTGADGGAGGWLFGNGANGTPGTGAAGGAGGWLFGNGGNGGHGATNTAATATGGAGGAGGILFGTGGNGGTGGIATGAGGIGGAGGAGGVSLLIGSGGTGGNGGNSIGVAGIGGAGGRGGDAGLLFGAAGTGGHGAAGGVPAGVGGAGGNGGLFANGGAGGAGGFNAAGGNGGNGGLFGTGGTGGAGTNFGAGGNGGNGGLFGAGGTGGAAGSGGSGITTGGGGHGGNAGLLSLGASGGAGGSGGASSLAGGAGGTGGNGALLFGFRGAGGAGGHGGAALTSIQQGGAGGAGGNGGLLFGSAGAGGAGGSGANALGAGTGGTGGDGGHAGVFGNGGDGGCRRVWRRYRRQRWCRRQRRADRQRRQRRQRRQSRGHARCRRHRRAAARRERTQRLAIAGRPATTRGVEGISCSPQMMP</sequence>
<name>PG03_MYCTU</name>
<keyword id="KW-0998">Cell outer membrane</keyword>
<keyword id="KW-0134">Cell wall</keyword>
<keyword id="KW-0472">Membrane</keyword>
<keyword id="KW-1185">Reference proteome</keyword>
<keyword id="KW-0677">Repeat</keyword>
<keyword id="KW-0964">Secreted</keyword>
<keyword id="KW-0843">Virulence</keyword>
<feature type="chain" id="PRO_0000023575" description="PE-PGRS family protein PE_PGRS3">
    <location>
        <begin position="1"/>
        <end position="957"/>
    </location>
</feature>
<feature type="domain" description="PE" evidence="1">
    <location>
        <begin position="4"/>
        <end position="94"/>
    </location>
</feature>
<feature type="region of interest" description="Disordered" evidence="2">
    <location>
        <begin position="893"/>
        <end position="957"/>
    </location>
</feature>
<feature type="compositionally biased region" description="Basic residues" evidence="2">
    <location>
        <begin position="893"/>
        <end position="925"/>
    </location>
</feature>
<evidence type="ECO:0000255" key="1"/>
<evidence type="ECO:0000256" key="2">
    <source>
        <dbReference type="SAM" id="MobiDB-lite"/>
    </source>
</evidence>
<evidence type="ECO:0000269" key="3">
    <source>
    </source>
</evidence>
<evidence type="ECO:0000269" key="4">
    <source>
    </source>
</evidence>
<evidence type="ECO:0000305" key="5"/>
<evidence type="ECO:0000312" key="6">
    <source>
        <dbReference type="EMBL" id="CCP43008.1"/>
    </source>
</evidence>
<comment type="function">
    <text evidence="4">The arginine-rich C-terminal region protrudes from the mycobacterial membrane and mediates M.tuberculosis entry into host epithelial cells (PubMed:33757409). May serve as a bridge between mycobacteria and host cells by interacting with specific host phospholipids and extracting them from host cells, for their direct integration or as a source of phosphate, during phases of TB pathogenesis when M.tuberculosis is short of phosphate supply (PubMed:33757409).</text>
</comment>
<comment type="subcellular location">
    <subcellularLocation>
        <location evidence="4">Cell outer membrane</location>
    </subcellularLocation>
    <subcellularLocation>
        <location evidence="3">Secreted</location>
    </subcellularLocation>
    <subcellularLocation>
        <location evidence="4">Secreted</location>
        <location evidence="4">Cell wall</location>
    </subcellularLocation>
    <subcellularLocation>
        <location evidence="3 4">Cell surface</location>
    </subcellularLocation>
</comment>
<comment type="induction">
    <text evidence="3 4">Specifically expressed under low phosphate concentrations (PubMed:30192424). Expression is very low and undetectable under classical growth conditions but long-term exposure to low phosphate triggers its expression (PubMed:30192424). Administration of free phosphate, cardiolipin and phosphatidylinositol to phosphate-starved culture turns off expression of the gene (PubMed:33757409).</text>
</comment>
<comment type="domain">
    <text evidence="3 4">The 77 amino acids long, arginine-rich C-terminal domain plays a critical role in tuberculosis pathogenesis (PubMed:30192424, PubMed:33757409). This positively charged helical domain specifically binds phosphorylated phosphatidylinositols and cardiolipin, whereas it is unable to bind other phospholipids (PubMed:33757409).</text>
</comment>
<comment type="PTM">
    <text evidence="4">A cleavage of the protein removes the N-terminal 120-150 residues, immediately upstream the PGRS domain (PubMed:33757409). The exact position of the cleavage site could not be identified (PubMed:33757409).</text>
</comment>
<comment type="miscellaneous">
    <text evidence="3 4">Expression in M.smegmatis enhances adhesion of M.smegmatis to murine macrophages and human alveolar epithelial cells and improves bacterial persistence in spleen tissue following infection in mice (PubMed:30192424). Overexpression in M.tuberculosis improves adhesion to pneumocytes, but not to phagocytic cells (PubMed:33757409).</text>
</comment>
<comment type="similarity">
    <text evidence="5">Belongs to the mycobacterial PE family. PGRS subfamily.</text>
</comment>
<reference key="1">
    <citation type="journal article" date="1998" name="Nature">
        <title>Deciphering the biology of Mycobacterium tuberculosis from the complete genome sequence.</title>
        <authorList>
            <person name="Cole S.T."/>
            <person name="Brosch R."/>
            <person name="Parkhill J."/>
            <person name="Garnier T."/>
            <person name="Churcher C.M."/>
            <person name="Harris D.E."/>
            <person name="Gordon S.V."/>
            <person name="Eiglmeier K."/>
            <person name="Gas S."/>
            <person name="Barry C.E. III"/>
            <person name="Tekaia F."/>
            <person name="Badcock K."/>
            <person name="Basham D."/>
            <person name="Brown D."/>
            <person name="Chillingworth T."/>
            <person name="Connor R."/>
            <person name="Davies R.M."/>
            <person name="Devlin K."/>
            <person name="Feltwell T."/>
            <person name="Gentles S."/>
            <person name="Hamlin N."/>
            <person name="Holroyd S."/>
            <person name="Hornsby T."/>
            <person name="Jagels K."/>
            <person name="Krogh A."/>
            <person name="McLean J."/>
            <person name="Moule S."/>
            <person name="Murphy L.D."/>
            <person name="Oliver S."/>
            <person name="Osborne J."/>
            <person name="Quail M.A."/>
            <person name="Rajandream M.A."/>
            <person name="Rogers J."/>
            <person name="Rutter S."/>
            <person name="Seeger K."/>
            <person name="Skelton S."/>
            <person name="Squares S."/>
            <person name="Squares R."/>
            <person name="Sulston J.E."/>
            <person name="Taylor K."/>
            <person name="Whitehead S."/>
            <person name="Barrell B.G."/>
        </authorList>
    </citation>
    <scope>NUCLEOTIDE SEQUENCE [LARGE SCALE GENOMIC DNA]</scope>
    <source>
        <strain>ATCC 25618 / H37Rv</strain>
    </source>
</reference>
<reference key="2">
    <citation type="journal article" date="2018" name="Cell. Microbiol.">
        <title>PE_PGRS3 of Mycobacterium tuberculosis is specifically expressed at low phosphate concentration, and its arginine-rich C-terminal domain mediates adhesion and persistence in host tissues when expressed in Mycobacterium smegmatis.</title>
        <authorList>
            <person name="De Maio F."/>
            <person name="Battah B."/>
            <person name="Palmieri V."/>
            <person name="Petrone L."/>
            <person name="Corrente F."/>
            <person name="Salustri A."/>
            <person name="Palucci I."/>
            <person name="Bellesi S."/>
            <person name="Papi M."/>
            <person name="Rubino S."/>
            <person name="Sali M."/>
            <person name="Goletti D."/>
            <person name="Sanguinetti M."/>
            <person name="Manganelli R."/>
            <person name="De Spirito M."/>
            <person name="Delogu G."/>
        </authorList>
    </citation>
    <scope>SUBCELLULAR LOCATION</scope>
    <scope>INDUCTION</scope>
    <scope>DOMAIN</scope>
    <scope>EXPRESSION IN M.SMEGMATIS</scope>
    <source>
        <strain>H37Rv</strain>
    </source>
</reference>
<reference key="3">
    <citation type="journal article" date="2021" name="Virulence">
        <title>PE_PGRS3 ensures provision of the vital phospholipids cardiolipin and phosphatidylinositols by promoting the interaction between M. tuberculosis and host cells.</title>
        <authorList>
            <person name="De Maio F."/>
            <person name="Salustri A."/>
            <person name="Battah B."/>
            <person name="Palucci I."/>
            <person name="Marchionni F."/>
            <person name="Bellesi S."/>
            <person name="Palmieri V."/>
            <person name="Papi M."/>
            <person name="Kramarska E."/>
            <person name="Sanguinetti M."/>
            <person name="Sali M."/>
            <person name="Berisio R."/>
            <person name="Delogu G."/>
        </authorList>
    </citation>
    <scope>FUNCTION</scope>
    <scope>SUBCELLULAR LOCATION</scope>
    <scope>INDUCTION</scope>
    <scope>DOMAIN</scope>
    <scope>CLEAVAGE</scope>
    <scope>OVEREXPRESSION</scope>
</reference>